<reference key="1">
    <citation type="journal article" date="2004" name="PLoS Biol.">
        <title>Genomic insights into methanotrophy: the complete genome sequence of Methylococcus capsulatus (Bath).</title>
        <authorList>
            <person name="Ward N.L."/>
            <person name="Larsen O."/>
            <person name="Sakwa J."/>
            <person name="Bruseth L."/>
            <person name="Khouri H.M."/>
            <person name="Durkin A.S."/>
            <person name="Dimitrov G."/>
            <person name="Jiang L."/>
            <person name="Scanlan D."/>
            <person name="Kang K.H."/>
            <person name="Lewis M.R."/>
            <person name="Nelson K.E."/>
            <person name="Methe B.A."/>
            <person name="Wu M."/>
            <person name="Heidelberg J.F."/>
            <person name="Paulsen I.T."/>
            <person name="Fouts D.E."/>
            <person name="Ravel J."/>
            <person name="Tettelin H."/>
            <person name="Ren Q."/>
            <person name="Read T.D."/>
            <person name="DeBoy R.T."/>
            <person name="Seshadri R."/>
            <person name="Salzberg S.L."/>
            <person name="Jensen H.B."/>
            <person name="Birkeland N.K."/>
            <person name="Nelson W.C."/>
            <person name="Dodson R.J."/>
            <person name="Grindhaug S.H."/>
            <person name="Holt I.E."/>
            <person name="Eidhammer I."/>
            <person name="Jonasen I."/>
            <person name="Vanaken S."/>
            <person name="Utterback T.R."/>
            <person name="Feldblyum T.V."/>
            <person name="Fraser C.M."/>
            <person name="Lillehaug J.R."/>
            <person name="Eisen J.A."/>
        </authorList>
    </citation>
    <scope>NUCLEOTIDE SEQUENCE [LARGE SCALE GENOMIC DNA]</scope>
    <source>
        <strain>ATCC 33009 / NCIMB 11132 / Bath</strain>
    </source>
</reference>
<sequence length="187" mass="20297">MENFHGTTIVSVRRGDQVVIGGDGQVTLGDTVMKGNARKVRRLYNGRVLAGFAGATADAFTLFERFESQLEKHRGNLTKAAVELVKDWRTDRMLRRLEALLAIADDKASLIISGNGDVIEPENGLIAIGSGGPFAQSAARALLENTELGARDIVEKSLIIAADICIYTNRNLTIEELETGRNFPNLA</sequence>
<organism>
    <name type="scientific">Methylococcus capsulatus (strain ATCC 33009 / NCIMB 11132 / Bath)</name>
    <dbReference type="NCBI Taxonomy" id="243233"/>
    <lineage>
        <taxon>Bacteria</taxon>
        <taxon>Pseudomonadati</taxon>
        <taxon>Pseudomonadota</taxon>
        <taxon>Gammaproteobacteria</taxon>
        <taxon>Methylococcales</taxon>
        <taxon>Methylococcaceae</taxon>
        <taxon>Methylococcus</taxon>
    </lineage>
</organism>
<protein>
    <recommendedName>
        <fullName evidence="1">ATP-dependent protease subunit HslV</fullName>
        <ecNumber evidence="1">3.4.25.2</ecNumber>
    </recommendedName>
</protein>
<dbReference type="EC" id="3.4.25.2" evidence="1"/>
<dbReference type="EMBL" id="AE017282">
    <property type="protein sequence ID" value="AAU91756.1"/>
    <property type="molecule type" value="Genomic_DNA"/>
</dbReference>
<dbReference type="RefSeq" id="WP_010961259.1">
    <property type="nucleotide sequence ID" value="NC_002977.6"/>
</dbReference>
<dbReference type="SMR" id="Q606K2"/>
<dbReference type="STRING" id="243233.MCA2014"/>
<dbReference type="MEROPS" id="T01.007"/>
<dbReference type="GeneID" id="88224242"/>
<dbReference type="KEGG" id="mca:MCA2014"/>
<dbReference type="eggNOG" id="COG5405">
    <property type="taxonomic scope" value="Bacteria"/>
</dbReference>
<dbReference type="HOGENOM" id="CLU_093872_1_0_6"/>
<dbReference type="Proteomes" id="UP000006821">
    <property type="component" value="Chromosome"/>
</dbReference>
<dbReference type="GO" id="GO:0009376">
    <property type="term" value="C:HslUV protease complex"/>
    <property type="evidence" value="ECO:0007669"/>
    <property type="project" value="UniProtKB-UniRule"/>
</dbReference>
<dbReference type="GO" id="GO:0005839">
    <property type="term" value="C:proteasome core complex"/>
    <property type="evidence" value="ECO:0007669"/>
    <property type="project" value="InterPro"/>
</dbReference>
<dbReference type="GO" id="GO:0046872">
    <property type="term" value="F:metal ion binding"/>
    <property type="evidence" value="ECO:0007669"/>
    <property type="project" value="UniProtKB-KW"/>
</dbReference>
<dbReference type="GO" id="GO:0004298">
    <property type="term" value="F:threonine-type endopeptidase activity"/>
    <property type="evidence" value="ECO:0007669"/>
    <property type="project" value="UniProtKB-KW"/>
</dbReference>
<dbReference type="GO" id="GO:0051603">
    <property type="term" value="P:proteolysis involved in protein catabolic process"/>
    <property type="evidence" value="ECO:0007669"/>
    <property type="project" value="InterPro"/>
</dbReference>
<dbReference type="CDD" id="cd01913">
    <property type="entry name" value="protease_HslV"/>
    <property type="match status" value="1"/>
</dbReference>
<dbReference type="FunFam" id="3.60.20.10:FF:000002">
    <property type="entry name" value="ATP-dependent protease subunit HslV"/>
    <property type="match status" value="1"/>
</dbReference>
<dbReference type="Gene3D" id="3.60.20.10">
    <property type="entry name" value="Glutamine Phosphoribosylpyrophosphate, subunit 1, domain 1"/>
    <property type="match status" value="1"/>
</dbReference>
<dbReference type="HAMAP" id="MF_00248">
    <property type="entry name" value="HslV"/>
    <property type="match status" value="1"/>
</dbReference>
<dbReference type="InterPro" id="IPR022281">
    <property type="entry name" value="ATP-dep_Prtase_HsIV_su"/>
</dbReference>
<dbReference type="InterPro" id="IPR029055">
    <property type="entry name" value="Ntn_hydrolases_N"/>
</dbReference>
<dbReference type="InterPro" id="IPR001353">
    <property type="entry name" value="Proteasome_sua/b"/>
</dbReference>
<dbReference type="InterPro" id="IPR023333">
    <property type="entry name" value="Proteasome_suB-type"/>
</dbReference>
<dbReference type="NCBIfam" id="TIGR03692">
    <property type="entry name" value="ATP_dep_HslV"/>
    <property type="match status" value="1"/>
</dbReference>
<dbReference type="NCBIfam" id="NF003964">
    <property type="entry name" value="PRK05456.1"/>
    <property type="match status" value="1"/>
</dbReference>
<dbReference type="PANTHER" id="PTHR32194:SF0">
    <property type="entry name" value="ATP-DEPENDENT PROTEASE SUBUNIT HSLV"/>
    <property type="match status" value="1"/>
</dbReference>
<dbReference type="PANTHER" id="PTHR32194">
    <property type="entry name" value="METALLOPROTEASE TLDD"/>
    <property type="match status" value="1"/>
</dbReference>
<dbReference type="Pfam" id="PF00227">
    <property type="entry name" value="Proteasome"/>
    <property type="match status" value="1"/>
</dbReference>
<dbReference type="PIRSF" id="PIRSF039093">
    <property type="entry name" value="HslV"/>
    <property type="match status" value="1"/>
</dbReference>
<dbReference type="SUPFAM" id="SSF56235">
    <property type="entry name" value="N-terminal nucleophile aminohydrolases (Ntn hydrolases)"/>
    <property type="match status" value="1"/>
</dbReference>
<dbReference type="PROSITE" id="PS51476">
    <property type="entry name" value="PROTEASOME_BETA_2"/>
    <property type="match status" value="1"/>
</dbReference>
<gene>
    <name evidence="1" type="primary">hslV</name>
    <name type="ordered locus">MCA2014</name>
</gene>
<name>HSLV_METCA</name>
<proteinExistence type="inferred from homology"/>
<comment type="function">
    <text evidence="1">Protease subunit of a proteasome-like degradation complex believed to be a general protein degrading machinery.</text>
</comment>
<comment type="catalytic activity">
    <reaction evidence="1">
        <text>ATP-dependent cleavage of peptide bonds with broad specificity.</text>
        <dbReference type="EC" id="3.4.25.2"/>
    </reaction>
</comment>
<comment type="activity regulation">
    <text evidence="1">Allosterically activated by HslU binding.</text>
</comment>
<comment type="subunit">
    <text evidence="1">A double ring-shaped homohexamer of HslV is capped on each side by a ring-shaped HslU homohexamer. The assembly of the HslU/HslV complex is dependent on binding of ATP.</text>
</comment>
<comment type="subcellular location">
    <subcellularLocation>
        <location evidence="1">Cytoplasm</location>
    </subcellularLocation>
</comment>
<comment type="similarity">
    <text evidence="1">Belongs to the peptidase T1B family. HslV subfamily.</text>
</comment>
<evidence type="ECO:0000255" key="1">
    <source>
        <dbReference type="HAMAP-Rule" id="MF_00248"/>
    </source>
</evidence>
<feature type="chain" id="PRO_0000148124" description="ATP-dependent protease subunit HslV">
    <location>
        <begin position="1"/>
        <end position="187"/>
    </location>
</feature>
<feature type="active site" evidence="1">
    <location>
        <position position="7"/>
    </location>
</feature>
<feature type="binding site" evidence="1">
    <location>
        <position position="162"/>
    </location>
    <ligand>
        <name>Na(+)</name>
        <dbReference type="ChEBI" id="CHEBI:29101"/>
    </ligand>
</feature>
<feature type="binding site" evidence="1">
    <location>
        <position position="165"/>
    </location>
    <ligand>
        <name>Na(+)</name>
        <dbReference type="ChEBI" id="CHEBI:29101"/>
    </ligand>
</feature>
<feature type="binding site" evidence="1">
    <location>
        <position position="168"/>
    </location>
    <ligand>
        <name>Na(+)</name>
        <dbReference type="ChEBI" id="CHEBI:29101"/>
    </ligand>
</feature>
<accession>Q606K2</accession>
<keyword id="KW-0021">Allosteric enzyme</keyword>
<keyword id="KW-0963">Cytoplasm</keyword>
<keyword id="KW-0378">Hydrolase</keyword>
<keyword id="KW-0479">Metal-binding</keyword>
<keyword id="KW-0645">Protease</keyword>
<keyword id="KW-1185">Reference proteome</keyword>
<keyword id="KW-0915">Sodium</keyword>
<keyword id="KW-0888">Threonine protease</keyword>